<reference key="1">
    <citation type="journal article" date="1998" name="DNA Res.">
        <title>Complete sequence and gene organization of the genome of a hyper-thermophilic archaebacterium, Pyrococcus horikoshii OT3.</title>
        <authorList>
            <person name="Kawarabayasi Y."/>
            <person name="Sawada M."/>
            <person name="Horikawa H."/>
            <person name="Haikawa Y."/>
            <person name="Hino Y."/>
            <person name="Yamamoto S."/>
            <person name="Sekine M."/>
            <person name="Baba S."/>
            <person name="Kosugi H."/>
            <person name="Hosoyama A."/>
            <person name="Nagai Y."/>
            <person name="Sakai M."/>
            <person name="Ogura K."/>
            <person name="Otsuka R."/>
            <person name="Nakazawa H."/>
            <person name="Takamiya M."/>
            <person name="Ohfuku Y."/>
            <person name="Funahashi T."/>
            <person name="Tanaka T."/>
            <person name="Kudoh Y."/>
            <person name="Yamazaki J."/>
            <person name="Kushida N."/>
            <person name="Oguchi A."/>
            <person name="Aoki K."/>
            <person name="Yoshizawa T."/>
            <person name="Nakamura Y."/>
            <person name="Robb F.T."/>
            <person name="Horikoshi K."/>
            <person name="Masuchi Y."/>
            <person name="Shizuya H."/>
            <person name="Kikuchi H."/>
        </authorList>
    </citation>
    <scope>NUCLEOTIDE SEQUENCE [LARGE SCALE GENOMIC DNA]</scope>
    <source>
        <strain>ATCC 700860 / DSM 12428 / JCM 9974 / NBRC 100139 / OT-3</strain>
    </source>
</reference>
<evidence type="ECO:0000255" key="1">
    <source>
        <dbReference type="HAMAP-Rule" id="MF_00266"/>
    </source>
</evidence>
<proteinExistence type="inferred from homology"/>
<feature type="chain" id="PRO_0000157100" description="tRNA(Phe) 7-((3-amino-3-carboxypropyl)-4-demethylwyosine(37)-N(4))-methyltransferase 2">
    <location>
        <begin position="1"/>
        <end position="206"/>
    </location>
</feature>
<keyword id="KW-0489">Methyltransferase</keyword>
<keyword id="KW-0949">S-adenosyl-L-methionine</keyword>
<keyword id="KW-0808">Transferase</keyword>
<keyword id="KW-0819">tRNA processing</keyword>
<protein>
    <recommendedName>
        <fullName evidence="1">tRNA(Phe) 7-((3-amino-3-carboxypropyl)-4-demethylwyosine(37)-N(4))-methyltransferase 2</fullName>
        <ecNumber evidence="1">2.1.1.282</ecNumber>
    </recommendedName>
    <alternativeName>
        <fullName evidence="1">tRNA wyosine derivatives biosynthesis protein Taw3 2</fullName>
    </alternativeName>
</protein>
<name>TYW32_PYRHO</name>
<organism>
    <name type="scientific">Pyrococcus horikoshii (strain ATCC 700860 / DSM 12428 / JCM 9974 / NBRC 100139 / OT-3)</name>
    <dbReference type="NCBI Taxonomy" id="70601"/>
    <lineage>
        <taxon>Archaea</taxon>
        <taxon>Methanobacteriati</taxon>
        <taxon>Methanobacteriota</taxon>
        <taxon>Thermococci</taxon>
        <taxon>Thermococcales</taxon>
        <taxon>Thermococcaceae</taxon>
        <taxon>Pyrococcus</taxon>
    </lineage>
</organism>
<sequence>MKAKREALISLFHAIKEEKVDSDIIDLLLLINSIKGIYTTSSCSGRIGILEEPSLGAKPLSRWLIKVHRPMSFEEARDALKRAREGLIFLKSQPPIFHVVAETIENAKLVHEIGLASGFKYTTFKAISSRFLVEINGTEYLTVPLGKDGRIIASDEYLKFAISIGNKMLERGKSKLPRLRDNFEKIKKKLGEDPLFIQLKREILEI</sequence>
<comment type="function">
    <text evidence="1">S-adenosyl-L-methionine-dependent methyltransferase that acts as a component of the wyosine derivatives biosynthesis pathway. Probably methylates N-4 position of wybutosine-86 to produce wybutosine-72.</text>
</comment>
<comment type="catalytic activity">
    <reaction evidence="1">
        <text>4-demethyl-7-[(3S)-3-amino-3-carboxypropyl]wyosine(37) in tRNA(Phe) + S-adenosyl-L-methionine = 7-[(3S)-3-amino-3-carboxypropyl]wyosine(37) in tRNA(Phe) + S-adenosyl-L-homocysteine + H(+)</text>
        <dbReference type="Rhea" id="RHEA:36635"/>
        <dbReference type="Rhea" id="RHEA-COMP:10378"/>
        <dbReference type="Rhea" id="RHEA-COMP:10379"/>
        <dbReference type="ChEBI" id="CHEBI:15378"/>
        <dbReference type="ChEBI" id="CHEBI:57856"/>
        <dbReference type="ChEBI" id="CHEBI:59789"/>
        <dbReference type="ChEBI" id="CHEBI:73543"/>
        <dbReference type="ChEBI" id="CHEBI:73550"/>
        <dbReference type="EC" id="2.1.1.282"/>
    </reaction>
</comment>
<comment type="similarity">
    <text evidence="1">Belongs to the TYW3 family.</text>
</comment>
<accession>O59533</accession>
<gene>
    <name evidence="1" type="primary">taw3-2</name>
    <name type="ordered locus">PH1887</name>
</gene>
<dbReference type="EC" id="2.1.1.282" evidence="1"/>
<dbReference type="EMBL" id="BA000001">
    <property type="protein sequence ID" value="BAA31009.1"/>
    <property type="molecule type" value="Genomic_DNA"/>
</dbReference>
<dbReference type="PIR" id="B71202">
    <property type="entry name" value="B71202"/>
</dbReference>
<dbReference type="RefSeq" id="WP_010885947.1">
    <property type="nucleotide sequence ID" value="NC_000961.1"/>
</dbReference>
<dbReference type="SMR" id="O59533"/>
<dbReference type="STRING" id="70601.gene:9378894"/>
<dbReference type="EnsemblBacteria" id="BAA31009">
    <property type="protein sequence ID" value="BAA31009"/>
    <property type="gene ID" value="BAA31009"/>
</dbReference>
<dbReference type="GeneID" id="1442729"/>
<dbReference type="KEGG" id="pho:PH1887"/>
<dbReference type="eggNOG" id="arCOG04156">
    <property type="taxonomic scope" value="Archaea"/>
</dbReference>
<dbReference type="OrthoDB" id="19299at2157"/>
<dbReference type="Proteomes" id="UP000000752">
    <property type="component" value="Chromosome"/>
</dbReference>
<dbReference type="GO" id="GO:0008175">
    <property type="term" value="F:tRNA methyltransferase activity"/>
    <property type="evidence" value="ECO:0007669"/>
    <property type="project" value="InterPro"/>
</dbReference>
<dbReference type="GO" id="GO:0030488">
    <property type="term" value="P:tRNA methylation"/>
    <property type="evidence" value="ECO:0007669"/>
    <property type="project" value="InterPro"/>
</dbReference>
<dbReference type="GO" id="GO:0031591">
    <property type="term" value="P:wybutosine biosynthetic process"/>
    <property type="evidence" value="ECO:0007669"/>
    <property type="project" value="InterPro"/>
</dbReference>
<dbReference type="FunFam" id="3.30.1960.10:FF:000010">
    <property type="entry name" value="tRNA(Phe) 7-((3-amino-3-carboxypropyl)-4-demethylwyosine(37)-N(4))-methyltransferase 1"/>
    <property type="match status" value="1"/>
</dbReference>
<dbReference type="Gene3D" id="3.30.1960.10">
    <property type="entry name" value="tRNA wybutosine-synthesizing-like"/>
    <property type="match status" value="1"/>
</dbReference>
<dbReference type="HAMAP" id="MF_00266">
    <property type="entry name" value="TYW3_archaea"/>
    <property type="match status" value="1"/>
</dbReference>
<dbReference type="InterPro" id="IPR022908">
    <property type="entry name" value="Taw3"/>
</dbReference>
<dbReference type="InterPro" id="IPR003827">
    <property type="entry name" value="tRNA_yW-synthesising"/>
</dbReference>
<dbReference type="InterPro" id="IPR036602">
    <property type="entry name" value="tRNA_yW-synthesising-like_sf"/>
</dbReference>
<dbReference type="NCBIfam" id="NF003264">
    <property type="entry name" value="PRK04235.1-2"/>
    <property type="match status" value="1"/>
</dbReference>
<dbReference type="NCBIfam" id="NF047731">
    <property type="entry name" value="tRNAMtaseTaw3"/>
    <property type="match status" value="1"/>
</dbReference>
<dbReference type="PANTHER" id="PTHR48418">
    <property type="entry name" value="TRNA WYBUTOSINE-SYNTHESIZING PROTEIN 3"/>
    <property type="match status" value="1"/>
</dbReference>
<dbReference type="PANTHER" id="PTHR48418:SF1">
    <property type="entry name" value="TRNA WYBUTOSINE-SYNTHESIZING PROTEIN 3"/>
    <property type="match status" value="1"/>
</dbReference>
<dbReference type="Pfam" id="PF02676">
    <property type="entry name" value="TYW3"/>
    <property type="match status" value="1"/>
</dbReference>
<dbReference type="SUPFAM" id="SSF111278">
    <property type="entry name" value="SSo0622-like"/>
    <property type="match status" value="1"/>
</dbReference>